<feature type="signal peptide" evidence="1">
    <location>
        <begin position="1"/>
        <end position="20"/>
    </location>
</feature>
<feature type="chain" id="PRO_0000392930" description="Seripauperin-18">
    <location>
        <begin position="21"/>
        <end position="120"/>
    </location>
</feature>
<organism>
    <name type="scientific">Saccharomyces cerevisiae (strain ATCC 204508 / S288c)</name>
    <name type="common">Baker's yeast</name>
    <dbReference type="NCBI Taxonomy" id="559292"/>
    <lineage>
        <taxon>Eukaryota</taxon>
        <taxon>Fungi</taxon>
        <taxon>Dikarya</taxon>
        <taxon>Ascomycota</taxon>
        <taxon>Saccharomycotina</taxon>
        <taxon>Saccharomycetes</taxon>
        <taxon>Saccharomycetales</taxon>
        <taxon>Saccharomycetaceae</taxon>
        <taxon>Saccharomyces</taxon>
    </lineage>
</organism>
<comment type="similarity">
    <text evidence="2">Belongs to the SRP1/TIP1 family. Seripauperin subfamily.</text>
</comment>
<evidence type="ECO:0000255" key="1"/>
<evidence type="ECO:0000305" key="2"/>
<keyword id="KW-1185">Reference proteome</keyword>
<keyword id="KW-0732">Signal</keyword>
<gene>
    <name type="primary">PAU18</name>
    <name type="ordered locus">YLL064C</name>
    <name type="ORF">L0543</name>
</gene>
<protein>
    <recommendedName>
        <fullName>Seripauperin-18</fullName>
    </recommendedName>
</protein>
<name>PAU18_YEAST</name>
<accession>P0CE91</accession>
<accession>D6VXU5</accession>
<accession>P52921</accession>
<dbReference type="EMBL" id="Z47973">
    <property type="protein sequence ID" value="CAA87993.1"/>
    <property type="molecule type" value="Genomic_DNA"/>
</dbReference>
<dbReference type="EMBL" id="Z73169">
    <property type="protein sequence ID" value="CAA97517.1"/>
    <property type="molecule type" value="Genomic_DNA"/>
</dbReference>
<dbReference type="EMBL" id="BK006945">
    <property type="protein sequence ID" value="DAA09261.1"/>
    <property type="molecule type" value="Genomic_DNA"/>
</dbReference>
<dbReference type="PIR" id="S50956">
    <property type="entry name" value="S50956"/>
</dbReference>
<dbReference type="RefSeq" id="NP_013036.1">
    <property type="nucleotide sequence ID" value="NM_001181884.1"/>
</dbReference>
<dbReference type="BioGRID" id="31252">
    <property type="interactions" value="2"/>
</dbReference>
<dbReference type="BioGRID" id="35902">
    <property type="interactions" value="1"/>
</dbReference>
<dbReference type="FunCoup" id="P0CE91">
    <property type="interactions" value="36"/>
</dbReference>
<dbReference type="STRING" id="4932.YLL064C"/>
<dbReference type="PaxDb" id="4932-YLL064C"/>
<dbReference type="EnsemblFungi" id="YLL064C_mRNA">
    <property type="protein sequence ID" value="YLL064C"/>
    <property type="gene ID" value="YLL064C"/>
</dbReference>
<dbReference type="EnsemblFungi" id="YNR076W_mRNA">
    <property type="protein sequence ID" value="YNR076W"/>
    <property type="gene ID" value="YNR076W"/>
</dbReference>
<dbReference type="GeneID" id="850662"/>
<dbReference type="KEGG" id="sce:YLL064C"/>
<dbReference type="KEGG" id="sce:YNR076W"/>
<dbReference type="AGR" id="SGD:S000003987"/>
<dbReference type="SGD" id="S000003987">
    <property type="gene designation" value="PAU18"/>
</dbReference>
<dbReference type="VEuPathDB" id="FungiDB:YLL064C"/>
<dbReference type="VEuPathDB" id="FungiDB:YNR076W"/>
<dbReference type="eggNOG" id="ENOG502SR1B">
    <property type="taxonomic scope" value="Eukaryota"/>
</dbReference>
<dbReference type="GeneTree" id="ENSGT00940000176276"/>
<dbReference type="HOGENOM" id="CLU_136376_0_0_1"/>
<dbReference type="InParanoid" id="P0CE91"/>
<dbReference type="OMA" id="DIRXHLA"/>
<dbReference type="OrthoDB" id="4059055at2759"/>
<dbReference type="BioCyc" id="YEAST:G3O-32159-MONOMER"/>
<dbReference type="PRO" id="PR:P0CE91"/>
<dbReference type="Proteomes" id="UP000002311">
    <property type="component" value="Chromosome XII"/>
</dbReference>
<dbReference type="RNAct" id="P0CE91">
    <property type="molecule type" value="protein"/>
</dbReference>
<dbReference type="ExpressionAtlas" id="P0CE91">
    <property type="expression patterns" value="baseline"/>
</dbReference>
<dbReference type="GO" id="GO:0009277">
    <property type="term" value="C:fungal-type cell wall"/>
    <property type="evidence" value="ECO:0000318"/>
    <property type="project" value="GO_Central"/>
</dbReference>
<dbReference type="GO" id="GO:0005199">
    <property type="term" value="F:structural constituent of cell wall"/>
    <property type="evidence" value="ECO:0000318"/>
    <property type="project" value="GO_Central"/>
</dbReference>
<dbReference type="GO" id="GO:0031505">
    <property type="term" value="P:fungal-type cell wall organization"/>
    <property type="evidence" value="ECO:0000318"/>
    <property type="project" value="GO_Central"/>
</dbReference>
<dbReference type="InterPro" id="IPR000992">
    <property type="entry name" value="SRP1_TIP1"/>
</dbReference>
<dbReference type="InterPro" id="IPR050788">
    <property type="entry name" value="Yeast_SRP1/TIP1_CWP"/>
</dbReference>
<dbReference type="PANTHER" id="PTHR31002:SF34">
    <property type="entry name" value="CELL WALL PROTEIN CWP1-RELATED"/>
    <property type="match status" value="1"/>
</dbReference>
<dbReference type="PANTHER" id="PTHR31002">
    <property type="entry name" value="SERIPAUPERIN"/>
    <property type="match status" value="1"/>
</dbReference>
<dbReference type="Pfam" id="PF00660">
    <property type="entry name" value="SRP1_TIP1"/>
    <property type="match status" value="1"/>
</dbReference>
<dbReference type="PROSITE" id="PS00724">
    <property type="entry name" value="SRP1_TIP1"/>
    <property type="match status" value="1"/>
</dbReference>
<sequence>MVKLTSIAAGVAAIAATASATTTLAQSDERVNLVELGVYVSDIRAHLAQYYMFQAAHPTETYPVEVAEAVFNYGDFTTMLTGIAPDQVTRMITGVPWYSTRLKPAISKALSKDGIYTIAN</sequence>
<reference key="1">
    <citation type="submission" date="1995-01" db="EMBL/GenBank/DDBJ databases">
        <title>Sequence of a 37 kb DNA fragment from chromosome XII of Saccharomyces cerevisiae including the subtelomeric region of the left arm.</title>
        <authorList>
            <person name="Wedler H."/>
            <person name="Wambutt R."/>
        </authorList>
    </citation>
    <scope>NUCLEOTIDE SEQUENCE [GENOMIC DNA]</scope>
    <source>
        <strain>ATCC 204511 / S288c / AB972</strain>
    </source>
</reference>
<reference key="2">
    <citation type="journal article" date="1997" name="Nature">
        <title>The nucleotide sequence of Saccharomyces cerevisiae chromosome XII.</title>
        <authorList>
            <person name="Johnston M."/>
            <person name="Hillier L.W."/>
            <person name="Riles L."/>
            <person name="Albermann K."/>
            <person name="Andre B."/>
            <person name="Ansorge W."/>
            <person name="Benes V."/>
            <person name="Brueckner M."/>
            <person name="Delius H."/>
            <person name="Dubois E."/>
            <person name="Duesterhoeft A."/>
            <person name="Entian K.-D."/>
            <person name="Floeth M."/>
            <person name="Goffeau A."/>
            <person name="Hebling U."/>
            <person name="Heumann K."/>
            <person name="Heuss-Neitzel D."/>
            <person name="Hilbert H."/>
            <person name="Hilger F."/>
            <person name="Kleine K."/>
            <person name="Koetter P."/>
            <person name="Louis E.J."/>
            <person name="Messenguy F."/>
            <person name="Mewes H.-W."/>
            <person name="Miosga T."/>
            <person name="Moestl D."/>
            <person name="Mueller-Auer S."/>
            <person name="Nentwich U."/>
            <person name="Obermaier B."/>
            <person name="Piravandi E."/>
            <person name="Pohl T.M."/>
            <person name="Portetelle D."/>
            <person name="Purnelle B."/>
            <person name="Rechmann S."/>
            <person name="Rieger M."/>
            <person name="Rinke M."/>
            <person name="Rose M."/>
            <person name="Scharfe M."/>
            <person name="Scherens B."/>
            <person name="Scholler P."/>
            <person name="Schwager C."/>
            <person name="Schwarz S."/>
            <person name="Underwood A.P."/>
            <person name="Urrestarazu L.A."/>
            <person name="Vandenbol M."/>
            <person name="Verhasselt P."/>
            <person name="Vierendeels F."/>
            <person name="Voet M."/>
            <person name="Volckaert G."/>
            <person name="Voss H."/>
            <person name="Wambutt R."/>
            <person name="Wedler E."/>
            <person name="Wedler H."/>
            <person name="Zimmermann F.K."/>
            <person name="Zollner A."/>
            <person name="Hani J."/>
            <person name="Hoheisel J.D."/>
        </authorList>
    </citation>
    <scope>NUCLEOTIDE SEQUENCE [LARGE SCALE GENOMIC DNA]</scope>
    <source>
        <strain>ATCC 204508 / S288c</strain>
    </source>
</reference>
<reference key="3">
    <citation type="journal article" date="2014" name="G3 (Bethesda)">
        <title>The reference genome sequence of Saccharomyces cerevisiae: Then and now.</title>
        <authorList>
            <person name="Engel S.R."/>
            <person name="Dietrich F.S."/>
            <person name="Fisk D.G."/>
            <person name="Binkley G."/>
            <person name="Balakrishnan R."/>
            <person name="Costanzo M.C."/>
            <person name="Dwight S.S."/>
            <person name="Hitz B.C."/>
            <person name="Karra K."/>
            <person name="Nash R.S."/>
            <person name="Weng S."/>
            <person name="Wong E.D."/>
            <person name="Lloyd P."/>
            <person name="Skrzypek M.S."/>
            <person name="Miyasato S.R."/>
            <person name="Simison M."/>
            <person name="Cherry J.M."/>
        </authorList>
    </citation>
    <scope>GENOME REANNOTATION</scope>
    <source>
        <strain>ATCC 204508 / S288c</strain>
    </source>
</reference>
<proteinExistence type="inferred from homology"/>